<evidence type="ECO:0000250" key="1"/>
<evidence type="ECO:0000255" key="2"/>
<evidence type="ECO:0000255" key="3">
    <source>
        <dbReference type="PROSITE-ProRule" id="PRU00076"/>
    </source>
</evidence>
<evidence type="ECO:0000255" key="4">
    <source>
        <dbReference type="PROSITE-ProRule" id="PRU00124"/>
    </source>
</evidence>
<evidence type="ECO:0000255" key="5">
    <source>
        <dbReference type="PROSITE-ProRule" id="PRU00188"/>
    </source>
</evidence>
<evidence type="ECO:0000255" key="6">
    <source>
        <dbReference type="PROSITE-ProRule" id="PRU00219"/>
    </source>
</evidence>
<evidence type="ECO:0000256" key="7">
    <source>
        <dbReference type="SAM" id="MobiDB-lite"/>
    </source>
</evidence>
<evidence type="ECO:0000269" key="8">
    <source>
    </source>
</evidence>
<evidence type="ECO:0000269" key="9">
    <source>
    </source>
</evidence>
<evidence type="ECO:0000269" key="10">
    <source>
    </source>
</evidence>
<evidence type="ECO:0000269" key="11">
    <source>
    </source>
</evidence>
<evidence type="ECO:0000269" key="12">
    <source>
    </source>
</evidence>
<evidence type="ECO:0000305" key="13"/>
<evidence type="ECO:0000312" key="14">
    <source>
        <dbReference type="WormBase" id="K08E5.3a"/>
    </source>
</evidence>
<evidence type="ECO:0000312" key="15">
    <source>
        <dbReference type="WormBase" id="K08E5.3b"/>
    </source>
</evidence>
<accession>P34576</accession>
<accession>Q21340</accession>
<accession>Q65ZC2</accession>
<accession>Q9UA13</accession>
<feature type="signal peptide" evidence="2">
    <location>
        <begin position="1"/>
        <end position="24"/>
    </location>
</feature>
<feature type="chain" id="PRO_0000007662" description="Transmembrane cell adhesion receptor mua-3">
    <location>
        <begin position="25"/>
        <end position="3767"/>
    </location>
</feature>
<feature type="topological domain" description="Extracellular" evidence="2">
    <location>
        <begin position="25"/>
        <end position="3417"/>
    </location>
</feature>
<feature type="transmembrane region" description="Helical" evidence="2">
    <location>
        <begin position="3418"/>
        <end position="3438"/>
    </location>
</feature>
<feature type="topological domain" description="Cytoplasmic" evidence="2">
    <location>
        <begin position="3439"/>
        <end position="3767"/>
    </location>
</feature>
<feature type="domain" description="LDL-receptor class A 1" evidence="4">
    <location>
        <begin position="26"/>
        <end position="63"/>
    </location>
</feature>
<feature type="domain" description="LDL-receptor class A 2" evidence="4">
    <location>
        <begin position="96"/>
        <end position="132"/>
    </location>
</feature>
<feature type="domain" description="LDL-receptor class A 3" evidence="4">
    <location>
        <begin position="133"/>
        <end position="166"/>
    </location>
</feature>
<feature type="domain" description="LDL-receptor class A 4" evidence="4">
    <location>
        <begin position="167"/>
        <end position="209"/>
    </location>
</feature>
<feature type="domain" description="EGF-like 1" evidence="3">
    <location>
        <begin position="225"/>
        <end position="268"/>
    </location>
</feature>
<feature type="domain" description="EGF-like 2" evidence="3">
    <location>
        <begin position="375"/>
        <end position="416"/>
    </location>
</feature>
<feature type="domain" description="EGF-like 3" evidence="3">
    <location>
        <begin position="418"/>
        <end position="466"/>
    </location>
</feature>
<feature type="domain" description="EGF-like 4" evidence="3">
    <location>
        <begin position="468"/>
        <end position="517"/>
    </location>
</feature>
<feature type="domain" description="EGF-like 5" evidence="3">
    <location>
        <begin position="519"/>
        <end position="566"/>
    </location>
</feature>
<feature type="domain" description="EGF-like 6" evidence="3">
    <location>
        <begin position="614"/>
        <end position="663"/>
    </location>
</feature>
<feature type="domain" description="EGF-like 7" evidence="3">
    <location>
        <begin position="665"/>
        <end position="713"/>
    </location>
</feature>
<feature type="domain" description="EGF-like 8" evidence="3">
    <location>
        <begin position="714"/>
        <end position="760"/>
    </location>
</feature>
<feature type="domain" description="EGF-like 9" evidence="3">
    <location>
        <begin position="762"/>
        <end position="810"/>
    </location>
</feature>
<feature type="domain" description="EGF-like 10" evidence="3">
    <location>
        <begin position="816"/>
        <end position="860"/>
    </location>
</feature>
<feature type="domain" description="EGF-like 11" evidence="3">
    <location>
        <begin position="861"/>
        <end position="908"/>
    </location>
</feature>
<feature type="domain" description="EGF-like 12" evidence="3">
    <location>
        <begin position="910"/>
        <end position="961"/>
    </location>
</feature>
<feature type="domain" description="EGF-like 13" evidence="3">
    <location>
        <begin position="963"/>
        <end position="1012"/>
    </location>
</feature>
<feature type="domain" description="EGF-like 14" evidence="3">
    <location>
        <begin position="1029"/>
        <end position="1070"/>
    </location>
</feature>
<feature type="domain" description="EGF-like 15" evidence="3">
    <location>
        <begin position="1071"/>
        <end position="1118"/>
    </location>
</feature>
<feature type="domain" description="EGF-like 16" evidence="3">
    <location>
        <begin position="1120"/>
        <end position="1168"/>
    </location>
</feature>
<feature type="domain" description="EGF-like 17" evidence="3">
    <location>
        <begin position="1170"/>
        <end position="1219"/>
    </location>
</feature>
<feature type="domain" description="VWFA" evidence="6">
    <location>
        <begin position="1230"/>
        <end position="1406"/>
    </location>
</feature>
<feature type="domain" description="EGF-like 18" evidence="3">
    <location>
        <begin position="1421"/>
        <end position="1466"/>
    </location>
</feature>
<feature type="domain" description="EGF-like 19" evidence="3">
    <location>
        <begin position="1466"/>
        <end position="1510"/>
    </location>
</feature>
<feature type="domain" description="EGF-like 20" evidence="3">
    <location>
        <begin position="1521"/>
        <end position="1562"/>
    </location>
</feature>
<feature type="domain" description="EGF-like 21" evidence="3">
    <location>
        <begin position="1563"/>
        <end position="1608"/>
    </location>
</feature>
<feature type="domain" description="EGF-like 22" evidence="3">
    <location>
        <begin position="1608"/>
        <end position="1656"/>
    </location>
</feature>
<feature type="domain" description="EGF-like 23" evidence="3">
    <location>
        <begin position="1658"/>
        <end position="1706"/>
    </location>
</feature>
<feature type="domain" description="EGF-like 24" evidence="3">
    <location>
        <begin position="1708"/>
        <end position="1755"/>
    </location>
</feature>
<feature type="domain" description="EGF-like 25" evidence="3">
    <location>
        <begin position="1759"/>
        <end position="1807"/>
    </location>
</feature>
<feature type="domain" description="EGF-like 26" evidence="3">
    <location>
        <begin position="1809"/>
        <end position="1860"/>
    </location>
</feature>
<feature type="domain" description="EGF-like 27" evidence="3">
    <location>
        <begin position="1862"/>
        <end position="1911"/>
    </location>
</feature>
<feature type="domain" description="EGF-like 28" evidence="3">
    <location>
        <begin position="1913"/>
        <end position="1961"/>
    </location>
</feature>
<feature type="domain" description="EGF-like 29" evidence="3">
    <location>
        <begin position="1963"/>
        <end position="2011"/>
    </location>
</feature>
<feature type="domain" description="EGF-like 30" evidence="3">
    <location>
        <begin position="2014"/>
        <end position="2062"/>
    </location>
</feature>
<feature type="domain" description="EGF-like 31" evidence="3">
    <location>
        <begin position="2068"/>
        <end position="2112"/>
    </location>
</feature>
<feature type="domain" description="EGF-like 32" evidence="3">
    <location>
        <begin position="2113"/>
        <end position="2160"/>
    </location>
</feature>
<feature type="domain" description="EGF-like 33" evidence="3">
    <location>
        <begin position="2162"/>
        <end position="2208"/>
    </location>
</feature>
<feature type="domain" description="EGF-like 34" evidence="3">
    <location>
        <begin position="2210"/>
        <end position="2258"/>
    </location>
</feature>
<feature type="domain" description="EGF-like 35" evidence="3">
    <location>
        <begin position="2260"/>
        <end position="2308"/>
    </location>
</feature>
<feature type="domain" description="EGF-like 36" evidence="3">
    <location>
        <begin position="2310"/>
        <end position="2358"/>
    </location>
</feature>
<feature type="domain" description="EGF-like 37" evidence="3">
    <location>
        <begin position="2360"/>
        <end position="2408"/>
    </location>
</feature>
<feature type="domain" description="EGF-like 38" evidence="3">
    <location>
        <begin position="2409"/>
        <end position="2455"/>
    </location>
</feature>
<feature type="domain" description="EGF-like 39" evidence="3">
    <location>
        <begin position="2456"/>
        <end position="2504"/>
    </location>
</feature>
<feature type="domain" description="EGF-like 40" evidence="3">
    <location>
        <begin position="2513"/>
        <end position="2563"/>
    </location>
</feature>
<feature type="domain" description="EGF-like 41" evidence="3">
    <location>
        <begin position="2565"/>
        <end position="2616"/>
    </location>
</feature>
<feature type="domain" description="EGF-like 42" evidence="3">
    <location>
        <begin position="2618"/>
        <end position="2666"/>
    </location>
</feature>
<feature type="domain" description="EGF-like 43" evidence="3">
    <location>
        <begin position="2668"/>
        <end position="2714"/>
    </location>
</feature>
<feature type="domain" description="EGF-like 44" evidence="3">
    <location>
        <begin position="2716"/>
        <end position="2763"/>
    </location>
</feature>
<feature type="domain" description="EGF-like 45" evidence="3">
    <location>
        <begin position="2763"/>
        <end position="2811"/>
    </location>
</feature>
<feature type="domain" description="EGF-like 46" evidence="3">
    <location>
        <begin position="2833"/>
        <end position="2872"/>
    </location>
</feature>
<feature type="domain" description="SEA 1" evidence="5">
    <location>
        <begin position="2873"/>
        <end position="2999"/>
    </location>
</feature>
<feature type="domain" description="EGF-like 47" evidence="3">
    <location>
        <begin position="3009"/>
        <end position="3048"/>
    </location>
</feature>
<feature type="domain" description="SEA 2" evidence="5">
    <location>
        <begin position="3049"/>
        <end position="3174"/>
    </location>
</feature>
<feature type="domain" description="EGF-like 48" evidence="3">
    <location>
        <begin position="3176"/>
        <end position="3220"/>
    </location>
</feature>
<feature type="domain" description="EGF-like 49" evidence="3">
    <location>
        <begin position="3224"/>
        <end position="3272"/>
    </location>
</feature>
<feature type="domain" description="EGF-like 50" evidence="3">
    <location>
        <begin position="3272"/>
        <end position="3324"/>
    </location>
</feature>
<feature type="domain" description="EGF-like 51; calcium-binding" evidence="3">
    <location>
        <begin position="3328"/>
        <end position="3373"/>
    </location>
</feature>
<feature type="domain" description="EGF-like 52" evidence="3">
    <location>
        <begin position="3373"/>
        <end position="3409"/>
    </location>
</feature>
<feature type="region of interest" description="Disordered" evidence="7">
    <location>
        <begin position="2492"/>
        <end position="2521"/>
    </location>
</feature>
<feature type="region of interest" description="Disordered" evidence="7">
    <location>
        <begin position="3582"/>
        <end position="3729"/>
    </location>
</feature>
<feature type="compositionally biased region" description="Pro residues" evidence="7">
    <location>
        <begin position="2504"/>
        <end position="2515"/>
    </location>
</feature>
<feature type="compositionally biased region" description="Polar residues" evidence="7">
    <location>
        <begin position="3588"/>
        <end position="3597"/>
    </location>
</feature>
<feature type="compositionally biased region" description="Low complexity" evidence="7">
    <location>
        <begin position="3630"/>
        <end position="3665"/>
    </location>
</feature>
<feature type="compositionally biased region" description="Basic and acidic residues" evidence="7">
    <location>
        <begin position="3675"/>
        <end position="3684"/>
    </location>
</feature>
<feature type="compositionally biased region" description="Low complexity" evidence="7">
    <location>
        <begin position="3690"/>
        <end position="3702"/>
    </location>
</feature>
<feature type="glycosylation site" description="N-linked (GlcNAc...) asparagine" evidence="2">
    <location>
        <position position="201"/>
    </location>
</feature>
<feature type="glycosylation site" description="N-linked (GlcNAc...) asparagine" evidence="2">
    <location>
        <position position="207"/>
    </location>
</feature>
<feature type="glycosylation site" description="N-linked (GlcNAc...) asparagine" evidence="2">
    <location>
        <position position="383"/>
    </location>
</feature>
<feature type="glycosylation site" description="N-linked (GlcNAc...) asparagine" evidence="2">
    <location>
        <position position="515"/>
    </location>
</feature>
<feature type="glycosylation site" description="N-linked (GlcNAc...) asparagine" evidence="10 11">
    <location>
        <position position="1350"/>
    </location>
</feature>
<feature type="glycosylation site" description="N-linked (GlcNAc...) asparagine" evidence="11">
    <location>
        <position position="2944"/>
    </location>
</feature>
<feature type="glycosylation site" description="N-linked (GlcNAc...) asparagine" evidence="11">
    <location>
        <position position="3120"/>
    </location>
</feature>
<feature type="glycosylation site" description="N-linked (GlcNAc...) asparagine" evidence="11">
    <location>
        <position position="3130"/>
    </location>
</feature>
<feature type="glycosylation site" description="N-linked (GlcNAc...) asparagine" evidence="2">
    <location>
        <position position="3285"/>
    </location>
</feature>
<feature type="glycosylation site" description="N-linked (GlcNAc...) asparagine; atypical" evidence="11">
    <location>
        <position position="3337"/>
    </location>
</feature>
<feature type="glycosylation site" description="N-linked (GlcNAc...) asparagine" evidence="11">
    <location>
        <position position="3338"/>
    </location>
</feature>
<feature type="glycosylation site" description="N-linked (GlcNAc...) asparagine" evidence="2">
    <location>
        <position position="3394"/>
    </location>
</feature>
<feature type="glycosylation site" description="N-linked (GlcNAc...) asparagine" evidence="2">
    <location>
        <position position="3414"/>
    </location>
</feature>
<feature type="disulfide bond" evidence="4">
    <location>
        <begin position="27"/>
        <end position="41"/>
    </location>
</feature>
<feature type="disulfide bond" evidence="4">
    <location>
        <begin position="35"/>
        <end position="54"/>
    </location>
</feature>
<feature type="disulfide bond" evidence="4">
    <location>
        <begin position="62"/>
        <end position="76"/>
    </location>
</feature>
<feature type="disulfide bond" evidence="4">
    <location>
        <begin position="69"/>
        <end position="89"/>
    </location>
</feature>
<feature type="disulfide bond" evidence="4">
    <location>
        <begin position="97"/>
        <end position="110"/>
    </location>
</feature>
<feature type="disulfide bond" evidence="4">
    <location>
        <begin position="104"/>
        <end position="123"/>
    </location>
</feature>
<feature type="disulfide bond" evidence="4">
    <location>
        <begin position="131"/>
        <end position="144"/>
    </location>
</feature>
<feature type="disulfide bond" evidence="4">
    <location>
        <begin position="138"/>
        <end position="157"/>
    </location>
</feature>
<feature type="disulfide bond" evidence="4">
    <location>
        <begin position="165"/>
        <end position="179"/>
    </location>
</feature>
<feature type="disulfide bond" evidence="4">
    <location>
        <begin position="172"/>
        <end position="192"/>
    </location>
</feature>
<feature type="disulfide bond" evidence="1">
    <location>
        <begin position="229"/>
        <end position="243"/>
    </location>
</feature>
<feature type="disulfide bond" evidence="1">
    <location>
        <begin position="235"/>
        <end position="252"/>
    </location>
</feature>
<feature type="disulfide bond" evidence="1">
    <location>
        <begin position="254"/>
        <end position="267"/>
    </location>
</feature>
<feature type="disulfide bond" evidence="3">
    <location>
        <begin position="381"/>
        <end position="392"/>
    </location>
</feature>
<feature type="disulfide bond" evidence="3">
    <location>
        <begin position="386"/>
        <end position="402"/>
    </location>
</feature>
<feature type="disulfide bond" evidence="3">
    <location>
        <begin position="404"/>
        <end position="415"/>
    </location>
</feature>
<feature type="disulfide bond" evidence="3">
    <location>
        <begin position="422"/>
        <end position="435"/>
    </location>
</feature>
<feature type="disulfide bond" evidence="3">
    <location>
        <begin position="429"/>
        <end position="444"/>
    </location>
</feature>
<feature type="disulfide bond" evidence="1">
    <location>
        <begin position="446"/>
        <end position="465"/>
    </location>
</feature>
<feature type="disulfide bond" evidence="3">
    <location>
        <begin position="472"/>
        <end position="486"/>
    </location>
</feature>
<feature type="disulfide bond" evidence="3">
    <location>
        <begin position="480"/>
        <end position="495"/>
    </location>
</feature>
<feature type="disulfide bond" evidence="1">
    <location>
        <begin position="497"/>
        <end position="516"/>
    </location>
</feature>
<feature type="disulfide bond" evidence="3">
    <location>
        <begin position="523"/>
        <end position="536"/>
    </location>
</feature>
<feature type="disulfide bond" evidence="3">
    <location>
        <begin position="530"/>
        <end position="545"/>
    </location>
</feature>
<feature type="disulfide bond" evidence="1">
    <location>
        <begin position="547"/>
        <end position="565"/>
    </location>
</feature>
<feature type="disulfide bond" evidence="3">
    <location>
        <begin position="618"/>
        <end position="632"/>
    </location>
</feature>
<feature type="disulfide bond" evidence="3">
    <location>
        <begin position="626"/>
        <end position="642"/>
    </location>
</feature>
<feature type="disulfide bond" evidence="1">
    <location>
        <begin position="644"/>
        <end position="662"/>
    </location>
</feature>
<feature type="disulfide bond" evidence="3">
    <location>
        <begin position="669"/>
        <end position="682"/>
    </location>
</feature>
<feature type="disulfide bond" evidence="3">
    <location>
        <begin position="676"/>
        <end position="691"/>
    </location>
</feature>
<feature type="disulfide bond" evidence="1">
    <location>
        <begin position="693"/>
        <end position="712"/>
    </location>
</feature>
<feature type="disulfide bond" evidence="3">
    <location>
        <begin position="718"/>
        <end position="729"/>
    </location>
</feature>
<feature type="disulfide bond" evidence="3">
    <location>
        <begin position="723"/>
        <end position="738"/>
    </location>
</feature>
<feature type="disulfide bond" evidence="1">
    <location>
        <begin position="740"/>
        <end position="759"/>
    </location>
</feature>
<feature type="disulfide bond" evidence="3">
    <location>
        <begin position="766"/>
        <end position="779"/>
    </location>
</feature>
<feature type="disulfide bond" evidence="3">
    <location>
        <begin position="773"/>
        <end position="788"/>
    </location>
</feature>
<feature type="disulfide bond" evidence="1">
    <location>
        <begin position="790"/>
        <end position="809"/>
    </location>
</feature>
<feature type="disulfide bond" evidence="1">
    <location>
        <begin position="820"/>
        <end position="836"/>
    </location>
</feature>
<feature type="disulfide bond" evidence="1">
    <location>
        <begin position="828"/>
        <end position="845"/>
    </location>
</feature>
<feature type="disulfide bond" evidence="1">
    <location>
        <begin position="847"/>
        <end position="859"/>
    </location>
</feature>
<feature type="disulfide bond" evidence="3">
    <location>
        <begin position="865"/>
        <end position="879"/>
    </location>
</feature>
<feature type="disulfide bond" evidence="3">
    <location>
        <begin position="873"/>
        <end position="888"/>
    </location>
</feature>
<feature type="disulfide bond" evidence="1">
    <location>
        <begin position="890"/>
        <end position="907"/>
    </location>
</feature>
<feature type="disulfide bond" evidence="3">
    <location>
        <begin position="914"/>
        <end position="930"/>
    </location>
</feature>
<feature type="disulfide bond" evidence="3">
    <location>
        <begin position="924"/>
        <end position="939"/>
    </location>
</feature>
<feature type="disulfide bond" evidence="1">
    <location>
        <begin position="941"/>
        <end position="960"/>
    </location>
</feature>
<feature type="disulfide bond" evidence="3">
    <location>
        <begin position="967"/>
        <end position="981"/>
    </location>
</feature>
<feature type="disulfide bond" evidence="3">
    <location>
        <begin position="975"/>
        <end position="990"/>
    </location>
</feature>
<feature type="disulfide bond" evidence="1">
    <location>
        <begin position="992"/>
        <end position="1011"/>
    </location>
</feature>
<feature type="disulfide bond" evidence="1">
    <location>
        <begin position="1033"/>
        <end position="1046"/>
    </location>
</feature>
<feature type="disulfide bond" evidence="1">
    <location>
        <begin position="1040"/>
        <end position="1055"/>
    </location>
</feature>
<feature type="disulfide bond" evidence="1">
    <location>
        <begin position="1057"/>
        <end position="1069"/>
    </location>
</feature>
<feature type="disulfide bond" evidence="3">
    <location>
        <begin position="1075"/>
        <end position="1087"/>
    </location>
</feature>
<feature type="disulfide bond" evidence="3">
    <location>
        <begin position="1081"/>
        <end position="1096"/>
    </location>
</feature>
<feature type="disulfide bond" evidence="1">
    <location>
        <begin position="1098"/>
        <end position="1117"/>
    </location>
</feature>
<feature type="disulfide bond" evidence="3">
    <location>
        <begin position="1124"/>
        <end position="1137"/>
    </location>
</feature>
<feature type="disulfide bond" evidence="3">
    <location>
        <begin position="1131"/>
        <end position="1146"/>
    </location>
</feature>
<feature type="disulfide bond" evidence="1">
    <location>
        <begin position="1148"/>
        <end position="1167"/>
    </location>
</feature>
<feature type="disulfide bond" evidence="3">
    <location>
        <begin position="1174"/>
        <end position="1188"/>
    </location>
</feature>
<feature type="disulfide bond" evidence="3">
    <location>
        <begin position="1182"/>
        <end position="1197"/>
    </location>
</feature>
<feature type="disulfide bond" evidence="1">
    <location>
        <begin position="1199"/>
        <end position="1218"/>
    </location>
</feature>
<feature type="disulfide bond" evidence="1">
    <location>
        <begin position="1425"/>
        <end position="1441"/>
    </location>
</feature>
<feature type="disulfide bond" evidence="1">
    <location>
        <begin position="1433"/>
        <end position="1450"/>
    </location>
</feature>
<feature type="disulfide bond" evidence="1">
    <location>
        <begin position="1452"/>
        <end position="1465"/>
    </location>
</feature>
<feature type="disulfide bond" evidence="1">
    <location>
        <begin position="1470"/>
        <end position="1484"/>
    </location>
</feature>
<feature type="disulfide bond" evidence="1">
    <location>
        <begin position="1478"/>
        <end position="1494"/>
    </location>
</feature>
<feature type="disulfide bond" evidence="1">
    <location>
        <begin position="1496"/>
        <end position="1509"/>
    </location>
</feature>
<feature type="disulfide bond" evidence="1">
    <location>
        <begin position="1525"/>
        <end position="1538"/>
    </location>
</feature>
<feature type="disulfide bond" evidence="1">
    <location>
        <begin position="1532"/>
        <end position="1547"/>
    </location>
</feature>
<feature type="disulfide bond" evidence="1">
    <location>
        <begin position="1549"/>
        <end position="1561"/>
    </location>
</feature>
<feature type="disulfide bond" evidence="1">
    <location>
        <begin position="1567"/>
        <end position="1583"/>
    </location>
</feature>
<feature type="disulfide bond" evidence="1">
    <location>
        <begin position="1575"/>
        <end position="1592"/>
    </location>
</feature>
<feature type="disulfide bond" evidence="1">
    <location>
        <begin position="1594"/>
        <end position="1607"/>
    </location>
</feature>
<feature type="disulfide bond" evidence="3">
    <location>
        <begin position="1612"/>
        <end position="1625"/>
    </location>
</feature>
<feature type="disulfide bond" evidence="3">
    <location>
        <begin position="1619"/>
        <end position="1634"/>
    </location>
</feature>
<feature type="disulfide bond" evidence="1">
    <location>
        <begin position="1636"/>
        <end position="1655"/>
    </location>
</feature>
<feature type="disulfide bond" evidence="3">
    <location>
        <begin position="1662"/>
        <end position="1675"/>
    </location>
</feature>
<feature type="disulfide bond" evidence="3">
    <location>
        <begin position="1669"/>
        <end position="1684"/>
    </location>
</feature>
<feature type="disulfide bond" evidence="1">
    <location>
        <begin position="1686"/>
        <end position="1705"/>
    </location>
</feature>
<feature type="disulfide bond" evidence="3">
    <location>
        <begin position="1712"/>
        <end position="1726"/>
    </location>
</feature>
<feature type="disulfide bond" evidence="3">
    <location>
        <begin position="1720"/>
        <end position="1735"/>
    </location>
</feature>
<feature type="disulfide bond" evidence="3">
    <location>
        <begin position="1737"/>
        <end position="1754"/>
    </location>
</feature>
<feature type="disulfide bond" evidence="3">
    <location>
        <begin position="1763"/>
        <end position="1776"/>
    </location>
</feature>
<feature type="disulfide bond" evidence="3">
    <location>
        <begin position="1770"/>
        <end position="1786"/>
    </location>
</feature>
<feature type="disulfide bond" evidence="1">
    <location>
        <begin position="1788"/>
        <end position="1806"/>
    </location>
</feature>
<feature type="disulfide bond" evidence="3">
    <location>
        <begin position="1813"/>
        <end position="1829"/>
    </location>
</feature>
<feature type="disulfide bond" evidence="3">
    <location>
        <begin position="1821"/>
        <end position="1838"/>
    </location>
</feature>
<feature type="disulfide bond" evidence="1">
    <location>
        <begin position="1840"/>
        <end position="1859"/>
    </location>
</feature>
<feature type="disulfide bond" evidence="3">
    <location>
        <begin position="1866"/>
        <end position="1880"/>
    </location>
</feature>
<feature type="disulfide bond" evidence="3">
    <location>
        <begin position="1873"/>
        <end position="1889"/>
    </location>
</feature>
<feature type="disulfide bond" evidence="1">
    <location>
        <begin position="1891"/>
        <end position="1910"/>
    </location>
</feature>
<feature type="disulfide bond" evidence="3">
    <location>
        <begin position="1917"/>
        <end position="1930"/>
    </location>
</feature>
<feature type="disulfide bond" evidence="3">
    <location>
        <begin position="1924"/>
        <end position="1939"/>
    </location>
</feature>
<feature type="disulfide bond" evidence="1">
    <location>
        <begin position="1941"/>
        <end position="1960"/>
    </location>
</feature>
<feature type="disulfide bond" evidence="3">
    <location>
        <begin position="1967"/>
        <end position="1980"/>
    </location>
</feature>
<feature type="disulfide bond" evidence="3">
    <location>
        <begin position="1974"/>
        <end position="1989"/>
    </location>
</feature>
<feature type="disulfide bond" evidence="1">
    <location>
        <begin position="1991"/>
        <end position="2010"/>
    </location>
</feature>
<feature type="disulfide bond" evidence="3">
    <location>
        <begin position="2018"/>
        <end position="2031"/>
    </location>
</feature>
<feature type="disulfide bond" evidence="3">
    <location>
        <begin position="2025"/>
        <end position="2040"/>
    </location>
</feature>
<feature type="disulfide bond" evidence="1">
    <location>
        <begin position="2042"/>
        <end position="2061"/>
    </location>
</feature>
<feature type="disulfide bond" evidence="1">
    <location>
        <begin position="2072"/>
        <end position="2088"/>
    </location>
</feature>
<feature type="disulfide bond" evidence="1">
    <location>
        <begin position="2080"/>
        <end position="2097"/>
    </location>
</feature>
<feature type="disulfide bond" evidence="1">
    <location>
        <begin position="2099"/>
        <end position="2111"/>
    </location>
</feature>
<feature type="disulfide bond" evidence="3">
    <location>
        <begin position="2117"/>
        <end position="2131"/>
    </location>
</feature>
<feature type="disulfide bond" evidence="3">
    <location>
        <begin position="2125"/>
        <end position="2140"/>
    </location>
</feature>
<feature type="disulfide bond" evidence="1">
    <location>
        <begin position="2142"/>
        <end position="2159"/>
    </location>
</feature>
<feature type="disulfide bond" evidence="3">
    <location>
        <begin position="2166"/>
        <end position="2180"/>
    </location>
</feature>
<feature type="disulfide bond" evidence="3">
    <location>
        <begin position="2174"/>
        <end position="2189"/>
    </location>
</feature>
<feature type="disulfide bond" evidence="1">
    <location>
        <begin position="2191"/>
        <end position="2207"/>
    </location>
</feature>
<feature type="disulfide bond" evidence="3">
    <location>
        <begin position="2214"/>
        <end position="2228"/>
    </location>
</feature>
<feature type="disulfide bond" evidence="3">
    <location>
        <begin position="2222"/>
        <end position="2237"/>
    </location>
</feature>
<feature type="disulfide bond" evidence="1">
    <location>
        <begin position="2239"/>
        <end position="2257"/>
    </location>
</feature>
<feature type="disulfide bond" evidence="3">
    <location>
        <begin position="2264"/>
        <end position="2278"/>
    </location>
</feature>
<feature type="disulfide bond" evidence="3">
    <location>
        <begin position="2272"/>
        <end position="2287"/>
    </location>
</feature>
<feature type="disulfide bond" evidence="3">
    <location>
        <begin position="2289"/>
        <end position="2307"/>
    </location>
</feature>
<feature type="disulfide bond" evidence="3">
    <location>
        <begin position="2314"/>
        <end position="2327"/>
    </location>
</feature>
<feature type="disulfide bond" evidence="3">
    <location>
        <begin position="2321"/>
        <end position="2336"/>
    </location>
</feature>
<feature type="disulfide bond" evidence="1">
    <location>
        <begin position="2338"/>
        <end position="2357"/>
    </location>
</feature>
<feature type="disulfide bond" evidence="3">
    <location>
        <begin position="2364"/>
        <end position="2377"/>
    </location>
</feature>
<feature type="disulfide bond" evidence="3">
    <location>
        <begin position="2371"/>
        <end position="2386"/>
    </location>
</feature>
<feature type="disulfide bond" evidence="1">
    <location>
        <begin position="2388"/>
        <end position="2407"/>
    </location>
</feature>
<feature type="disulfide bond" evidence="3">
    <location>
        <begin position="2413"/>
        <end position="2425"/>
    </location>
</feature>
<feature type="disulfide bond" evidence="3">
    <location>
        <begin position="2419"/>
        <end position="2435"/>
    </location>
</feature>
<feature type="disulfide bond" evidence="1">
    <location>
        <begin position="2437"/>
        <end position="2454"/>
    </location>
</feature>
<feature type="disulfide bond" evidence="3">
    <location>
        <begin position="2460"/>
        <end position="2474"/>
    </location>
</feature>
<feature type="disulfide bond" evidence="3">
    <location>
        <begin position="2468"/>
        <end position="2483"/>
    </location>
</feature>
<feature type="disulfide bond" evidence="1">
    <location>
        <begin position="2485"/>
        <end position="2503"/>
    </location>
</feature>
<feature type="disulfide bond" evidence="3">
    <location>
        <begin position="2517"/>
        <end position="2531"/>
    </location>
</feature>
<feature type="disulfide bond" evidence="3">
    <location>
        <begin position="2525"/>
        <end position="2541"/>
    </location>
</feature>
<feature type="disulfide bond" evidence="1">
    <location>
        <begin position="2543"/>
        <end position="2562"/>
    </location>
</feature>
<feature type="disulfide bond" evidence="3">
    <location>
        <begin position="2569"/>
        <end position="2583"/>
    </location>
</feature>
<feature type="disulfide bond" evidence="3">
    <location>
        <begin position="2577"/>
        <end position="2594"/>
    </location>
</feature>
<feature type="disulfide bond" evidence="1">
    <location>
        <begin position="2596"/>
        <end position="2615"/>
    </location>
</feature>
<feature type="disulfide bond" evidence="3">
    <location>
        <begin position="2622"/>
        <end position="2636"/>
    </location>
</feature>
<feature type="disulfide bond" evidence="3">
    <location>
        <begin position="2630"/>
        <end position="2645"/>
    </location>
</feature>
<feature type="disulfide bond" evidence="1">
    <location>
        <begin position="2647"/>
        <end position="2665"/>
    </location>
</feature>
<feature type="disulfide bond" evidence="3">
    <location>
        <begin position="2672"/>
        <end position="2686"/>
    </location>
</feature>
<feature type="disulfide bond" evidence="3">
    <location>
        <begin position="2680"/>
        <end position="2695"/>
    </location>
</feature>
<feature type="disulfide bond" evidence="1">
    <location>
        <begin position="2697"/>
        <end position="2713"/>
    </location>
</feature>
<feature type="disulfide bond" evidence="3">
    <location>
        <begin position="2720"/>
        <end position="2734"/>
    </location>
</feature>
<feature type="disulfide bond" evidence="3">
    <location>
        <begin position="2728"/>
        <end position="2743"/>
    </location>
</feature>
<feature type="disulfide bond" evidence="1">
    <location>
        <begin position="2745"/>
        <end position="2762"/>
    </location>
</feature>
<feature type="disulfide bond" evidence="3">
    <location>
        <begin position="2767"/>
        <end position="2781"/>
    </location>
</feature>
<feature type="disulfide bond" evidence="3">
    <location>
        <begin position="2775"/>
        <end position="2790"/>
    </location>
</feature>
<feature type="disulfide bond" evidence="1">
    <location>
        <begin position="2792"/>
        <end position="2810"/>
    </location>
</feature>
<feature type="disulfide bond" evidence="1">
    <location>
        <begin position="2837"/>
        <end position="2850"/>
    </location>
</feature>
<feature type="disulfide bond" evidence="1">
    <location>
        <begin position="2842"/>
        <end position="2856"/>
    </location>
</feature>
<feature type="disulfide bond" evidence="1">
    <location>
        <begin position="2858"/>
        <end position="2871"/>
    </location>
</feature>
<feature type="disulfide bond" evidence="1">
    <location>
        <begin position="3013"/>
        <end position="3026"/>
    </location>
</feature>
<feature type="disulfide bond" evidence="1">
    <location>
        <begin position="3018"/>
        <end position="3032"/>
    </location>
</feature>
<feature type="disulfide bond" evidence="1">
    <location>
        <begin position="3034"/>
        <end position="3047"/>
    </location>
</feature>
<feature type="disulfide bond" evidence="3">
    <location>
        <begin position="3180"/>
        <end position="3191"/>
    </location>
</feature>
<feature type="disulfide bond" evidence="3">
    <location>
        <begin position="3185"/>
        <end position="3201"/>
    </location>
</feature>
<feature type="disulfide bond" evidence="1">
    <location>
        <begin position="3203"/>
        <end position="3219"/>
    </location>
</feature>
<feature type="disulfide bond" evidence="3">
    <location>
        <begin position="3228"/>
        <end position="3242"/>
    </location>
</feature>
<feature type="disulfide bond" evidence="3">
    <location>
        <begin position="3236"/>
        <end position="3251"/>
    </location>
</feature>
<feature type="disulfide bond" evidence="1">
    <location>
        <begin position="3253"/>
        <end position="3271"/>
    </location>
</feature>
<feature type="disulfide bond" evidence="3">
    <location>
        <begin position="3276"/>
        <end position="3288"/>
    </location>
</feature>
<feature type="disulfide bond" evidence="3">
    <location>
        <begin position="3282"/>
        <end position="3297"/>
    </location>
</feature>
<feature type="disulfide bond" evidence="1">
    <location>
        <begin position="3299"/>
        <end position="3323"/>
    </location>
</feature>
<feature type="disulfide bond" evidence="3">
    <location>
        <begin position="3332"/>
        <end position="3345"/>
    </location>
</feature>
<feature type="disulfide bond" evidence="3">
    <location>
        <begin position="3339"/>
        <end position="3354"/>
    </location>
</feature>
<feature type="disulfide bond" evidence="1">
    <location>
        <begin position="3356"/>
        <end position="3372"/>
    </location>
</feature>
<feature type="disulfide bond" evidence="3">
    <location>
        <begin position="3377"/>
        <end position="3386"/>
    </location>
</feature>
<feature type="disulfide bond" evidence="3">
    <location>
        <begin position="3380"/>
        <end position="3397"/>
    </location>
</feature>
<feature type="disulfide bond" evidence="3">
    <location>
        <begin position="3399"/>
        <end position="3408"/>
    </location>
</feature>
<feature type="splice variant" id="VSP_016435" description="In isoform b." evidence="13">
    <location>
        <begin position="1"/>
        <end position="584"/>
    </location>
</feature>
<feature type="splice variant" id="VSP_016436" description="In isoform b." evidence="13">
    <original>EKNGETVCKCLLGYKNVGTKTHLNCQMEKR</original>
    <variation>MGRLSLGILLLAAVTSIASDNSCGGRSRLG</variation>
    <location>
        <begin position="585"/>
        <end position="614"/>
    </location>
</feature>
<protein>
    <recommendedName>
        <fullName>Transmembrane cell adhesion receptor mua-3</fullName>
    </recommendedName>
    <alternativeName>
        <fullName>Muscle attachment abnormal protein 3</fullName>
    </alternativeName>
</protein>
<sequence length="3767" mass="417291">MQAGISIFFLFLHIPIFFVNCSNSTSCVAREEFQCKMDDSCISMKKWQDGVDDCYDGSDEVCLPWQFDCQFGSPRCISKNKLHDKKIDCYSGFDEGCPAHYFVCRDRSACIEPSKYLNGVADCKDKSDEPCAQNQFQCSDGTKCIPKAQFQDGKEDCDDGSDEECTTSQFACQCGTIKCVSDTFIMDGNWDCEDGSDEFINKTLTANCTRNNKVNIATNSLSLGKLKFCSGKNPCKPELGQVCVIIGGTWRCVCKLGTFRPLGSDKCIPIELLTRYRNAPSSKCSNSHEEQFGLLQGFQKSLSSRKELERWSNIRRAPPRTLSGTTPSGSDGFLKSGAEQVPFMFQEDKNYVSVIPDEIIDSYGTIMTPPEFHFNRDDIRCGNKTCGLHESCQKNSESKYECICREGFTIFEGTCRELIDECAQGKHDCHPEARCVDALIGYECLCREGYLDTSIDPKARPGRKCRKLINECTNALMNDCSQNARCLDKPIGYTCRCQDDYVDVSREGARKPGRNCTQAINECASNLHNCDTHAICQDQPVGYSCRCPFGFIDSSPTALEPGRKCVQANNEAATTSTTTSQCIKEKNGETVCKCLLGYKNVGTKTHLNCQMEKRANPCQDYSLHDCDPVAECFSEQPGYFQCQCPKGFTDSSADKRFPGRKCVRAVDECALGRHTCDPHADCIDTHQGYTCKCRSGWSDTSLDPLRSPGRSCKKADMCSNIDCAAEAECRETPIGPMCQCVSGYVDVSRQHGRPAGRVCRAVVNECAEGRHDCSSHATCIDTADGFTCRCKDSYRDESSDTLKHPGKNCVRTVQPDPPECDVSDPMSCDPAKREVCIFVENTYKCRCANGYSRLPDGRCVVINECAEPRLNTCGKNAECIDLAEGYTCQCRSGYADISPVSQPGRICRARVNECSNKEKYNVDCSENAICADTEHSYSCRCRPGFADVSAAFNKLPGRRCIEAVNECASPSLNDCSKNAFCEDAKEGYICTCRPGYVDNSPNAARHPGRICTKPVEKIKTDLKDTSFSTDDGCDPKNPKCGANEACVQRHGQHNCECVETAFRYTDGSCRVYSACSKRNTCDKNAICLNRFDSYTCQCRPGYIDLSADLTNAPGRICKELINECASSDNECSPYARCIDATNGYACQCLDGFIDVSSRYNKPPGRQCTNSNNECSEKSLNTCDENADCVDTPDGYTCQCYGGFVDVSSNANLPPGRVCTVQTTCPKQKTDLVFLIDGSGSIGSYVFKNEVLRFVREFVELFEIGRSKTRVGLIQYSDQIRHEFDLDQYGDRDSLLKGISETQYLTGLTRTGAAIQHMVQEGFSERRGARPQQSDIARVAIILTDGRSQDNVTGPADSARKLSINTFAIGVTDHVLASELESIAGSPNRWFYVDKFKDLDTRLRSMIQKAACPSPTKQETPSEDVCNPRTQTGCDRSLNEHCAVENGRPRCVCPEGFTRHPFTRVCGGDLCNPQLITSCIFPEECQITPYKNFRCSCPEGYNRDYRSGFCVSVKEVQISPQHDANCHNGGVRCSENERCTNDGSDWFCECLPGFERIRNGQCAYPGSCNPNDPMSCDVRKRQQCLPRGNIYTCQCGRNEKRHPITDICLKNECLTGEHDCDRSARCIDTDESYICACQSGFIDHSPNPSERPGRVCVALQNECLDGSNRCSPNALCTDTEEGYVCRCKSGFVDYSPNPQTFPGMVCKELVNECTNPRLNQCDRNAHCIDTIEGYSCICKPGFVDMDEFGNPGRRCEQIKTNDKCSPGKNDCDRNARCIQIGDDDYSCACPPGFKDKSPSSSRPGRLCIPVIPECDNPTLNDCDSPDRAVCTDTDDGYMCRCRQGFLDISPSISVKPGRLCKPLQNECALGIDDCARDGGICEDNPDSFTCRCAMNYLDVSFDRVTRPGRKCKRLINECQTGQNDCSEEATCTDTEDSYICACPQSHIDLSPDTVNRPGRRCLMRINECTSNRHDCSPNADCIDTPESYKCRCRDDFVDESPDSSRRPGRICRPALVDECRTGKHDCHVNAICQDLPQGYTCQCSADFVDVSPHRASHPGRLCQPRPTPPPPECRLDGGNQCKVHLNEVCRLMGGEPKCSCPVNYQRDSSGSCSIINECLFTQLNDCHTAADCIDQVQGYTCQCRDGFKDIGDRRRPGRMCKPMVNECQYPHLNDCHQNAACIDLEEGYECKCNQGFMDHSHGRPGRICKQLTNECLRPSLNSCDRNARCIDKEEGYECECRDGFIDVSPSPTLKGRACRELVNECANSRLNDCDKNARCKDTMDSYECDCPVNSKDISPSPSFPGRVCLMFINECESGVHDCDPSATCRDNEQSFTCECPSGFVDRSPNKHARPGRVCVKLVDECREGRHTCSSHADCRDLEEGYTCECRDGYVDRSPNLASQPGRVCSAPEVCPPNHDCSSAAVCEPLGGMKYQCVCIQGYVDQSPGSQKGRVCVRNNACHDPRLNTCSRNAICYDEPRGYRCECKRGFMDRSPDSSQRGRVCEPPPPPSPPPRHPCQDPERNDCHPAGTCRATGAQSYTCECLSGYADRSPDPRNKPGRLCVLTEPVCLDPEQNDCHAAAICSEVNGPEKYTCKCRDGYTDESPDPLRRPGRICKGLINECLDRSLNDCHSLAVCKDLPNGYTCQCPINAKDQSPDPRKPGRICSLSVNECANPSLNSCSAFADCFDEENGYRCRCRNGYHDDDPAHPGHRCSFMINECDSSNLNDCDRNANCIDTAGGYDCACKAPYRDEGPPQSPGRICRLNECLNPNRNTCDRNADCRDLDYGYTCTCRHGFYDQSPNPQEPGRICIEFQQEEHIERVKVTTVQSEPRREFPCGRDDCIKARGEVCISGEYCGCKPGEGRSASTGKCQEVQETPFELRVVTRDQRPLMYSTEFGSQKSPSYVEIVELFEKNMARTFGGTSLAPRYVNTKVDYITHPKTKNSSWDQGLLFKYEVQTTKSQSQPIDECELWKQMQASLDRTNGAIGGGSLRVASDTDLLNPCKQQEEWGNCGGMSCKEHLKEVCIAGHICGCPDGMKRRDANSECRVVESWNVPLWVVRDKEKPIVFSESFDNPQTPVYKDYSKRLEKGIEGCYPHTELKNAFVTAEVNDIVNPVLMNASYDTGLLFNTTVHFRKGMVHVPSDAYYQLIKYVTKENNNEVGDSELYLNPTQPDPFNPCFKNDCDPHGKCIEISKYAYKCECGVGYRDINPQSPGKKCLPVHGFNECERKEDNECSENARCIDLEHLYKCECLPSYYDTSPVGSVPGSLCVLDYCSDVNFCPTNTTCKNMEQQAECKCDAGFMDIRKSEKRTALMLGDDTLCMHVRDVDECALGLNNCSGVAHCIDRAVGYTCKCPDGYIDGNPDEPGRVCGALLCDLCNAHGDCVHNTATNNITCVCTDGWTGPQCQVAPSNASLVLLILLALLFLLLTLCCLLYFCTKCHCFKGRRFAGAGANGFGYRRGGAWPWSTLEGSASSESGAEFSAMSAAGNDYYPDIGIPRAKLKSGMMASGNTAEVRNMEVARLDQYLDENAVRIPRAHLVDAHGDTSFDSLSEASSEYTIKEEIERKVITDVTTKEIKTTTTTDEQGNTIVTTTEAVHPRDTTIVHGGGYTQNESSSSSFSGGERAYQSQSQQQQSMSQGMSQSMSQHATSAGYSSSGMESSAHNSGYASIRHTGERERGGSEEEFSIGRARGMAAASSGYQHSSSENREVEEYCSEEEDVEHSVGDKRTIVTKNHSYEPFVNGESERFKTEVVTSQTSTHVTKK</sequence>
<reference key="1">
    <citation type="submission" date="1999-03" db="EMBL/GenBank/DDBJ databases">
        <title>mua-3 mRNA splicing pattern revealed.</title>
        <authorList>
            <person name="Lu Z."/>
            <person name="Vogel B."/>
            <person name="Hedgecock E."/>
        </authorList>
    </citation>
    <scope>NUCLEOTIDE SEQUENCE [MRNA] (ISOFORM A)</scope>
    <source>
        <strain>Bristol N2</strain>
    </source>
</reference>
<reference key="2">
    <citation type="journal article" date="2015" name="G3 (Bethesda)">
        <title>DPY-17 and MUA-3 interact for connective tissue-like tissue integrity in Caenorhabditis elegans: A model for Marfan Syndrome.</title>
        <authorList>
            <person name="Fotopoulos P."/>
            <person name="Kim J."/>
            <person name="Hyun M."/>
            <person name="Qamari W."/>
            <person name="Lee I."/>
            <person name="You Y.J."/>
        </authorList>
    </citation>
    <scope>NUCLEOTIDE SEQUENCE [GENOMIC DNA]</scope>
    <scope>FUNCTION</scope>
</reference>
<reference key="3">
    <citation type="journal article" date="1998" name="Science">
        <title>Genome sequence of the nematode C. elegans: a platform for investigating biology.</title>
        <authorList>
            <consortium name="The C. elegans sequencing consortium"/>
        </authorList>
    </citation>
    <scope>NUCLEOTIDE SEQUENCE [LARGE SCALE GENOMIC DNA]</scope>
    <source>
        <strain>Bristol N2</strain>
    </source>
</reference>
<reference key="4">
    <citation type="journal article" date="2001" name="J. Cell Biol.">
        <title>MUP-4 is a novel transmembrane protein with functions in epithelial cell adhesion in Caenorhabditis elegans.</title>
        <authorList>
            <person name="Hong L."/>
            <person name="Elbl T."/>
            <person name="Ward J."/>
            <person name="Franzini-Armstrong C."/>
            <person name="Rybicka K.K."/>
            <person name="Gatewood B.K."/>
            <person name="Baillie D.L."/>
            <person name="Bucher E.A."/>
        </authorList>
    </citation>
    <scope>FUNCTION</scope>
    <scope>DISRUPTION PHENOTYPE</scope>
</reference>
<reference key="5">
    <citation type="journal article" date="2001" name="J. Cell Biol.">
        <title>mua-3, a gene required for mechanical tissue integrity in Caenorhabditis elegans, encodes a novel transmembrane protein of epithelial attachment complexes.</title>
        <authorList>
            <person name="Bercher M."/>
            <person name="Wahl J."/>
            <person name="Vogel B.E."/>
            <person name="Lu C."/>
            <person name="Hedgecock E.M."/>
            <person name="Hall D.H."/>
            <person name="Plenefisch J.D."/>
        </authorList>
    </citation>
    <scope>FUNCTION</scope>
    <scope>SUBCELLULAR LOCATION</scope>
    <scope>TISSUE SPECIFICITY</scope>
    <scope>DEVELOPMENTAL STAGE</scope>
</reference>
<reference key="6">
    <citation type="journal article" date="2003" name="Nat. Biotechnol.">
        <title>Lectin affinity capture, isotope-coded tagging and mass spectrometry to identify N-linked glycoproteins.</title>
        <authorList>
            <person name="Kaji H."/>
            <person name="Saito H."/>
            <person name="Yamauchi Y."/>
            <person name="Shinkawa T."/>
            <person name="Taoka M."/>
            <person name="Hirabayashi J."/>
            <person name="Kasai K."/>
            <person name="Takahashi N."/>
            <person name="Isobe T."/>
        </authorList>
    </citation>
    <scope>GLYCOSYLATION [LARGE SCALE ANALYSIS] AT ASN-1350</scope>
    <scope>IDENTIFICATION BY MASS SPECTROMETRY</scope>
    <source>
        <strain>Bristol N2</strain>
    </source>
</reference>
<reference key="7">
    <citation type="journal article" date="2007" name="Mol. Cell. Proteomics">
        <title>Proteomics reveals N-linked glycoprotein diversity in Caenorhabditis elegans and suggests an atypical translocation mechanism for integral membrane proteins.</title>
        <authorList>
            <person name="Kaji H."/>
            <person name="Kamiie J."/>
            <person name="Kawakami H."/>
            <person name="Kido K."/>
            <person name="Yamauchi Y."/>
            <person name="Shinkawa T."/>
            <person name="Taoka M."/>
            <person name="Takahashi N."/>
            <person name="Isobe T."/>
        </authorList>
    </citation>
    <scope>GLYCOSYLATION [LARGE SCALE ANALYSIS] AT ASN-1350; ASN-2944; ASN-3120; ASN-3130; ASN-3337 AND ASN-3338</scope>
    <scope>IDENTIFICATION BY MASS SPECTROMETRY</scope>
    <source>
        <strain>Bristol N2</strain>
    </source>
</reference>
<organism>
    <name type="scientific">Caenorhabditis elegans</name>
    <dbReference type="NCBI Taxonomy" id="6239"/>
    <lineage>
        <taxon>Eukaryota</taxon>
        <taxon>Metazoa</taxon>
        <taxon>Ecdysozoa</taxon>
        <taxon>Nematoda</taxon>
        <taxon>Chromadorea</taxon>
        <taxon>Rhabditida</taxon>
        <taxon>Rhabditina</taxon>
        <taxon>Rhabditomorpha</taxon>
        <taxon>Rhabditoidea</taxon>
        <taxon>Rhabditidae</taxon>
        <taxon>Peloderinae</taxon>
        <taxon>Caenorhabditis</taxon>
    </lineage>
</organism>
<comment type="function">
    <text evidence="8 9 12">Involved in cell adhesion and required for organ positioning and attachment (PubMed:11470827, PubMed:11470828, PubMed:25917920). At the hypodermal surface, required for attachment of the hypdermermis to the basal cuticle in postembryonic development, possibly through intermediate filaments of the cytoskeleton (PubMed:11470828).</text>
</comment>
<comment type="subcellular location">
    <subcellularLocation>
        <location evidence="9">Cell membrane</location>
        <topology evidence="2">Single-pass membrane protein</topology>
    </subcellularLocation>
    <subcellularLocation>
        <location evidence="9">Cell junction</location>
        <location evidence="9">Hemidesmosome</location>
    </subcellularLocation>
    <text evidence="9">Co-localizes with cytoplasmic intermediate filaments at hemidesmosomes.</text>
</comment>
<comment type="alternative products">
    <event type="alternative splicing"/>
    <isoform>
        <id>P34576-1</id>
        <name evidence="14">a</name>
        <sequence type="displayed"/>
    </isoform>
    <isoform>
        <id>P34576-2</id>
        <name evidence="15">b</name>
        <sequence type="described" ref="VSP_016435 VSP_016436"/>
    </isoform>
</comment>
<comment type="tissue specificity">
    <text evidence="9">Expressed in the hypodermis at the sites of muscle contact, in striated muscles including body wall muscles, the anal sphincter muscles and the junctions between the anal sphincter muscle and rectal cuticle. Also expressed in non-muscle cells including the excretory duct cell and pore cells.</text>
</comment>
<comment type="developmental stage">
    <text evidence="9">Expressed from the two-fold stage onwards.</text>
</comment>
<comment type="disruption phenotype">
    <text evidence="8">RNAi-mediated knockdown results in detached dorsal muscles and retracted ventral muscles from the anterior and posterior ends of the worm.</text>
</comment>
<proteinExistence type="evidence at protein level"/>
<dbReference type="EMBL" id="AF139060">
    <property type="protein sequence ID" value="AAD29428.1"/>
    <property type="molecule type" value="mRNA"/>
</dbReference>
<dbReference type="EMBL" id="Z30974">
    <property type="protein sequence ID" value="CAA83226.2"/>
    <property type="molecule type" value="Genomic_DNA"/>
</dbReference>
<dbReference type="EMBL" id="Z30423">
    <property type="protein sequence ID" value="CAA83226.2"/>
    <property type="status" value="JOINED"/>
    <property type="molecule type" value="Genomic_DNA"/>
</dbReference>
<dbReference type="EMBL" id="Z30974">
    <property type="protein sequence ID" value="CAH19087.1"/>
    <property type="molecule type" value="Genomic_DNA"/>
</dbReference>
<dbReference type="EMBL" id="Z30423">
    <property type="protein sequence ID" value="CAH19087.1"/>
    <property type="status" value="JOINED"/>
    <property type="molecule type" value="Genomic_DNA"/>
</dbReference>
<dbReference type="PIR" id="S42373">
    <property type="entry name" value="S42373"/>
</dbReference>
<dbReference type="RefSeq" id="NP_001022674.1">
    <molecule id="P34576-1"/>
    <property type="nucleotide sequence ID" value="NM_001027503.4"/>
</dbReference>
<dbReference type="RefSeq" id="NP_001022675.1">
    <molecule id="P34576-2"/>
    <property type="nucleotide sequence ID" value="NM_001027504.3"/>
</dbReference>
<dbReference type="SMR" id="P34576"/>
<dbReference type="BioGRID" id="41624">
    <property type="interactions" value="11"/>
</dbReference>
<dbReference type="FunCoup" id="P34576">
    <property type="interactions" value="62"/>
</dbReference>
<dbReference type="IntAct" id="P34576">
    <property type="interactions" value="2"/>
</dbReference>
<dbReference type="STRING" id="6239.K08E5.3a.1"/>
<dbReference type="GlyCosmos" id="P34576">
    <property type="glycosylation" value="13 sites, No reported glycans"/>
</dbReference>
<dbReference type="iPTMnet" id="P34576"/>
<dbReference type="PaxDb" id="6239-K08E5.3a"/>
<dbReference type="PeptideAtlas" id="P34576"/>
<dbReference type="EnsemblMetazoa" id="K08E5.3a.1">
    <molecule id="P34576-1"/>
    <property type="protein sequence ID" value="K08E5.3a.1"/>
    <property type="gene ID" value="WBGene00003482"/>
</dbReference>
<dbReference type="EnsemblMetazoa" id="K08E5.3b.1">
    <molecule id="P34576-2"/>
    <property type="protein sequence ID" value="K08E5.3b.1"/>
    <property type="gene ID" value="WBGene00003482"/>
</dbReference>
<dbReference type="GeneID" id="176430"/>
<dbReference type="KEGG" id="cel:CELE_K08E5.3"/>
<dbReference type="UCSC" id="K08E5.3a">
    <molecule id="P34576-1"/>
    <property type="organism name" value="c. elegans"/>
</dbReference>
<dbReference type="AGR" id="WB:WBGene00003482"/>
<dbReference type="CTD" id="176430"/>
<dbReference type="WormBase" id="K08E5.3a">
    <molecule id="P34576-1"/>
    <property type="protein sequence ID" value="CE28049"/>
    <property type="gene ID" value="WBGene00003482"/>
    <property type="gene designation" value="mua-3"/>
</dbReference>
<dbReference type="WormBase" id="K08E5.3b">
    <molecule id="P34576-2"/>
    <property type="protein sequence ID" value="CE37256"/>
    <property type="gene ID" value="WBGene00003482"/>
    <property type="gene designation" value="mua-3"/>
</dbReference>
<dbReference type="eggNOG" id="KOG1217">
    <property type="taxonomic scope" value="Eukaryota"/>
</dbReference>
<dbReference type="InParanoid" id="P34576"/>
<dbReference type="OMA" id="PPRHPCQ"/>
<dbReference type="OrthoDB" id="4405280at2759"/>
<dbReference type="PhylomeDB" id="P34576"/>
<dbReference type="PRO" id="PR:P34576"/>
<dbReference type="Proteomes" id="UP000001940">
    <property type="component" value="Chromosome III"/>
</dbReference>
<dbReference type="Bgee" id="WBGene00003482">
    <property type="expression patterns" value="Expressed in embryo and 3 other cell types or tissues"/>
</dbReference>
<dbReference type="GO" id="GO:0030056">
    <property type="term" value="C:hemidesmosome"/>
    <property type="evidence" value="ECO:0000314"/>
    <property type="project" value="WormBase"/>
</dbReference>
<dbReference type="GO" id="GO:0005882">
    <property type="term" value="C:intermediate filament"/>
    <property type="evidence" value="ECO:0000314"/>
    <property type="project" value="WormBase"/>
</dbReference>
<dbReference type="GO" id="GO:0005886">
    <property type="term" value="C:plasma membrane"/>
    <property type="evidence" value="ECO:0007669"/>
    <property type="project" value="UniProtKB-SubCell"/>
</dbReference>
<dbReference type="GO" id="GO:0005509">
    <property type="term" value="F:calcium ion binding"/>
    <property type="evidence" value="ECO:0007669"/>
    <property type="project" value="InterPro"/>
</dbReference>
<dbReference type="GO" id="GO:0005518">
    <property type="term" value="F:collagen binding"/>
    <property type="evidence" value="ECO:0000250"/>
    <property type="project" value="WormBase"/>
</dbReference>
<dbReference type="GO" id="GO:0019215">
    <property type="term" value="F:intermediate filament binding"/>
    <property type="evidence" value="ECO:0000250"/>
    <property type="project" value="WormBase"/>
</dbReference>
<dbReference type="GO" id="GO:0007160">
    <property type="term" value="P:cell-matrix adhesion"/>
    <property type="evidence" value="ECO:0000315"/>
    <property type="project" value="WormBase"/>
</dbReference>
<dbReference type="CDD" id="cd00054">
    <property type="entry name" value="EGF_CA"/>
    <property type="match status" value="9"/>
</dbReference>
<dbReference type="CDD" id="cd00112">
    <property type="entry name" value="LDLa"/>
    <property type="match status" value="2"/>
</dbReference>
<dbReference type="CDD" id="cd01482">
    <property type="entry name" value="vWA_collagen_alphaI-XII-like"/>
    <property type="match status" value="1"/>
</dbReference>
<dbReference type="FunFam" id="2.10.25.10:FF:000973">
    <property type="entry name" value="Transmembrane cell adhesion receptor mua-3"/>
    <property type="match status" value="1"/>
</dbReference>
<dbReference type="FunFam" id="2.10.25.10:FF:000291">
    <property type="entry name" value="Transmembrane matrix receptor MUP-4"/>
    <property type="match status" value="7"/>
</dbReference>
<dbReference type="FunFam" id="2.10.25.10:FF:000822">
    <property type="entry name" value="Transmembrane matrix receptor MUP-4"/>
    <property type="match status" value="1"/>
</dbReference>
<dbReference type="FunFam" id="3.40.50.410:FF:000047">
    <property type="entry name" value="von Willebrand factor A domain containing 2"/>
    <property type="match status" value="1"/>
</dbReference>
<dbReference type="Gene3D" id="2.10.25.10">
    <property type="entry name" value="Laminin"/>
    <property type="match status" value="31"/>
</dbReference>
<dbReference type="Gene3D" id="4.10.400.10">
    <property type="entry name" value="Low-density Lipoprotein Receptor"/>
    <property type="match status" value="4"/>
</dbReference>
<dbReference type="Gene3D" id="2.90.20.10">
    <property type="entry name" value="Plasmodium vivax P25 domain"/>
    <property type="match status" value="1"/>
</dbReference>
<dbReference type="Gene3D" id="3.40.50.410">
    <property type="entry name" value="von Willebrand factor, type A domain"/>
    <property type="match status" value="1"/>
</dbReference>
<dbReference type="InterPro" id="IPR001881">
    <property type="entry name" value="EGF-like_Ca-bd_dom"/>
</dbReference>
<dbReference type="InterPro" id="IPR013032">
    <property type="entry name" value="EGF-like_CS"/>
</dbReference>
<dbReference type="InterPro" id="IPR000742">
    <property type="entry name" value="EGF-like_dom"/>
</dbReference>
<dbReference type="InterPro" id="IPR000152">
    <property type="entry name" value="EGF-type_Asp/Asn_hydroxyl_site"/>
</dbReference>
<dbReference type="InterPro" id="IPR018097">
    <property type="entry name" value="EGF_Ca-bd_CS"/>
</dbReference>
<dbReference type="InterPro" id="IPR009030">
    <property type="entry name" value="Growth_fac_rcpt_cys_sf"/>
</dbReference>
<dbReference type="InterPro" id="IPR036055">
    <property type="entry name" value="LDL_receptor-like_sf"/>
</dbReference>
<dbReference type="InterPro" id="IPR002172">
    <property type="entry name" value="LDrepeatLR_classA_rpt"/>
</dbReference>
<dbReference type="InterPro" id="IPR056590">
    <property type="entry name" value="Mua-3/Mup-4_EGF"/>
</dbReference>
<dbReference type="InterPro" id="IPR052235">
    <property type="entry name" value="Nephronectin_domain"/>
</dbReference>
<dbReference type="InterPro" id="IPR049883">
    <property type="entry name" value="NOTCH1_EGF-like"/>
</dbReference>
<dbReference type="InterPro" id="IPR000082">
    <property type="entry name" value="SEA_dom"/>
</dbReference>
<dbReference type="InterPro" id="IPR002035">
    <property type="entry name" value="VWF_A"/>
</dbReference>
<dbReference type="InterPro" id="IPR036465">
    <property type="entry name" value="vWFA_dom_sf"/>
</dbReference>
<dbReference type="PANTHER" id="PTHR24050">
    <property type="entry name" value="PA14 DOMAIN-CONTAINING PROTEIN"/>
    <property type="match status" value="1"/>
</dbReference>
<dbReference type="PANTHER" id="PTHR24050:SF28">
    <property type="entry name" value="UROMODULIN-LIKE"/>
    <property type="match status" value="1"/>
</dbReference>
<dbReference type="Pfam" id="PF00008">
    <property type="entry name" value="EGF"/>
    <property type="match status" value="2"/>
</dbReference>
<dbReference type="Pfam" id="PF23427">
    <property type="entry name" value="EGF_4"/>
    <property type="match status" value="1"/>
</dbReference>
<dbReference type="Pfam" id="PF07645">
    <property type="entry name" value="EGF_CA"/>
    <property type="match status" value="24"/>
</dbReference>
<dbReference type="Pfam" id="PF25478">
    <property type="entry name" value="EGF_Mua-3"/>
    <property type="match status" value="1"/>
</dbReference>
<dbReference type="Pfam" id="PF12661">
    <property type="entry name" value="hEGF"/>
    <property type="match status" value="4"/>
</dbReference>
<dbReference type="Pfam" id="PF00057">
    <property type="entry name" value="Ldl_recept_a"/>
    <property type="match status" value="2"/>
</dbReference>
<dbReference type="Pfam" id="PF01390">
    <property type="entry name" value="SEA"/>
    <property type="match status" value="1"/>
</dbReference>
<dbReference type="Pfam" id="PF25314">
    <property type="entry name" value="TNFR_nem"/>
    <property type="match status" value="2"/>
</dbReference>
<dbReference type="Pfam" id="PF00092">
    <property type="entry name" value="VWA"/>
    <property type="match status" value="1"/>
</dbReference>
<dbReference type="PRINTS" id="PR00261">
    <property type="entry name" value="LDLRECEPTOR"/>
</dbReference>
<dbReference type="PRINTS" id="PR00453">
    <property type="entry name" value="VWFADOMAIN"/>
</dbReference>
<dbReference type="SMART" id="SM00181">
    <property type="entry name" value="EGF"/>
    <property type="match status" value="50"/>
</dbReference>
<dbReference type="SMART" id="SM00179">
    <property type="entry name" value="EGF_CA"/>
    <property type="match status" value="41"/>
</dbReference>
<dbReference type="SMART" id="SM00192">
    <property type="entry name" value="LDLa"/>
    <property type="match status" value="5"/>
</dbReference>
<dbReference type="SMART" id="SM00286">
    <property type="entry name" value="PTI"/>
    <property type="match status" value="15"/>
</dbReference>
<dbReference type="SMART" id="SM00200">
    <property type="entry name" value="SEA"/>
    <property type="match status" value="2"/>
</dbReference>
<dbReference type="SMART" id="SM00327">
    <property type="entry name" value="VWA"/>
    <property type="match status" value="1"/>
</dbReference>
<dbReference type="SUPFAM" id="SSF57196">
    <property type="entry name" value="EGF/Laminin"/>
    <property type="match status" value="12"/>
</dbReference>
<dbReference type="SUPFAM" id="SSF57184">
    <property type="entry name" value="Growth factor receptor domain"/>
    <property type="match status" value="1"/>
</dbReference>
<dbReference type="SUPFAM" id="SSF57424">
    <property type="entry name" value="LDL receptor-like module"/>
    <property type="match status" value="3"/>
</dbReference>
<dbReference type="SUPFAM" id="SSF53300">
    <property type="entry name" value="vWA-like"/>
    <property type="match status" value="1"/>
</dbReference>
<dbReference type="PROSITE" id="PS00010">
    <property type="entry name" value="ASX_HYDROXYL"/>
    <property type="match status" value="32"/>
</dbReference>
<dbReference type="PROSITE" id="PS00022">
    <property type="entry name" value="EGF_1"/>
    <property type="match status" value="1"/>
</dbReference>
<dbReference type="PROSITE" id="PS01186">
    <property type="entry name" value="EGF_2"/>
    <property type="match status" value="6"/>
</dbReference>
<dbReference type="PROSITE" id="PS50026">
    <property type="entry name" value="EGF_3"/>
    <property type="match status" value="42"/>
</dbReference>
<dbReference type="PROSITE" id="PS01187">
    <property type="entry name" value="EGF_CA"/>
    <property type="match status" value="1"/>
</dbReference>
<dbReference type="PROSITE" id="PS50068">
    <property type="entry name" value="LDLRA_2"/>
    <property type="match status" value="4"/>
</dbReference>
<dbReference type="PROSITE" id="PS50024">
    <property type="entry name" value="SEA"/>
    <property type="match status" value="2"/>
</dbReference>
<dbReference type="PROSITE" id="PS50234">
    <property type="entry name" value="VWFA"/>
    <property type="match status" value="1"/>
</dbReference>
<keyword id="KW-0025">Alternative splicing</keyword>
<keyword id="KW-0130">Cell adhesion</keyword>
<keyword id="KW-0965">Cell junction</keyword>
<keyword id="KW-1003">Cell membrane</keyword>
<keyword id="KW-1015">Disulfide bond</keyword>
<keyword id="KW-0245">EGF-like domain</keyword>
<keyword id="KW-0325">Glycoprotein</keyword>
<keyword id="KW-0472">Membrane</keyword>
<keyword id="KW-0675">Receptor</keyword>
<keyword id="KW-1185">Reference proteome</keyword>
<keyword id="KW-0677">Repeat</keyword>
<keyword id="KW-0732">Signal</keyword>
<keyword id="KW-0812">Transmembrane</keyword>
<keyword id="KW-1133">Transmembrane helix</keyword>
<gene>
    <name evidence="14" type="primary">mua-3</name>
    <name evidence="14" type="ORF">K08E5.3</name>
</gene>
<name>MUA3_CAEEL</name>